<sequence length="76" mass="8762">MPHIDVKHFPRNLSEEEKKIVAEDLAAVLKKHFGSSNDSLSVAFNEIQPERWKDEVYDPIIKPHLDTLAKKPGYSY</sequence>
<dbReference type="EC" id="5.3.2.-" evidence="1"/>
<dbReference type="EMBL" id="BX950851">
    <property type="protein sequence ID" value="CAG75148.1"/>
    <property type="molecule type" value="Genomic_DNA"/>
</dbReference>
<dbReference type="RefSeq" id="WP_011093803.1">
    <property type="nucleotide sequence ID" value="NC_004547.2"/>
</dbReference>
<dbReference type="SMR" id="Q6D4Z5"/>
<dbReference type="STRING" id="218491.ECA2245"/>
<dbReference type="GeneID" id="57209033"/>
<dbReference type="KEGG" id="eca:ECA2245"/>
<dbReference type="PATRIC" id="fig|218491.5.peg.2276"/>
<dbReference type="eggNOG" id="COG1942">
    <property type="taxonomic scope" value="Bacteria"/>
</dbReference>
<dbReference type="HOGENOM" id="CLU_183611_0_1_6"/>
<dbReference type="OrthoDB" id="3395834at2"/>
<dbReference type="Proteomes" id="UP000007966">
    <property type="component" value="Chromosome"/>
</dbReference>
<dbReference type="GO" id="GO:0005737">
    <property type="term" value="C:cytoplasm"/>
    <property type="evidence" value="ECO:0007669"/>
    <property type="project" value="UniProtKB-SubCell"/>
</dbReference>
<dbReference type="GO" id="GO:0016862">
    <property type="term" value="F:intramolecular oxidoreductase activity, interconverting keto- and enol-groups"/>
    <property type="evidence" value="ECO:0007669"/>
    <property type="project" value="UniProtKB-UniRule"/>
</dbReference>
<dbReference type="Gene3D" id="3.30.429.10">
    <property type="entry name" value="Macrophage Migration Inhibitory Factor"/>
    <property type="match status" value="1"/>
</dbReference>
<dbReference type="HAMAP" id="MF_00718">
    <property type="entry name" value="Tautomerase_PptA"/>
    <property type="match status" value="1"/>
</dbReference>
<dbReference type="InterPro" id="IPR004370">
    <property type="entry name" value="4-OT-like_dom"/>
</dbReference>
<dbReference type="InterPro" id="IPR014347">
    <property type="entry name" value="Tautomerase/MIF_sf"/>
</dbReference>
<dbReference type="InterPro" id="IPR017284">
    <property type="entry name" value="Tautomerase_PptA"/>
</dbReference>
<dbReference type="NCBIfam" id="NF002324">
    <property type="entry name" value="PRK01271.1"/>
    <property type="match status" value="1"/>
</dbReference>
<dbReference type="Pfam" id="PF01361">
    <property type="entry name" value="Tautomerase"/>
    <property type="match status" value="1"/>
</dbReference>
<dbReference type="PIRSF" id="PIRSF037799">
    <property type="entry name" value="Tautomer_YdcE_prd"/>
    <property type="match status" value="1"/>
</dbReference>
<dbReference type="SUPFAM" id="SSF55331">
    <property type="entry name" value="Tautomerase/MIF"/>
    <property type="match status" value="1"/>
</dbReference>
<organism>
    <name type="scientific">Pectobacterium atrosepticum (strain SCRI 1043 / ATCC BAA-672)</name>
    <name type="common">Erwinia carotovora subsp. atroseptica</name>
    <dbReference type="NCBI Taxonomy" id="218491"/>
    <lineage>
        <taxon>Bacteria</taxon>
        <taxon>Pseudomonadati</taxon>
        <taxon>Pseudomonadota</taxon>
        <taxon>Gammaproteobacteria</taxon>
        <taxon>Enterobacterales</taxon>
        <taxon>Pectobacteriaceae</taxon>
        <taxon>Pectobacterium</taxon>
    </lineage>
</organism>
<feature type="initiator methionine" description="Removed" evidence="1">
    <location>
        <position position="1"/>
    </location>
</feature>
<feature type="chain" id="PRO_0000348339" description="Tautomerase PptA">
    <location>
        <begin position="2"/>
        <end position="76"/>
    </location>
</feature>
<feature type="active site" description="Proton acceptor; via imino nitrogen" evidence="1">
    <location>
        <position position="2"/>
    </location>
</feature>
<protein>
    <recommendedName>
        <fullName evidence="1">Tautomerase PptA</fullName>
        <ecNumber evidence="1">5.3.2.-</ecNumber>
    </recommendedName>
</protein>
<accession>Q6D4Z5</accession>
<reference key="1">
    <citation type="journal article" date="2004" name="Proc. Natl. Acad. Sci. U.S.A.">
        <title>Genome sequence of the enterobacterial phytopathogen Erwinia carotovora subsp. atroseptica and characterization of virulence factors.</title>
        <authorList>
            <person name="Bell K.S."/>
            <person name="Sebaihia M."/>
            <person name="Pritchard L."/>
            <person name="Holden M.T.G."/>
            <person name="Hyman L.J."/>
            <person name="Holeva M.C."/>
            <person name="Thomson N.R."/>
            <person name="Bentley S.D."/>
            <person name="Churcher L.J.C."/>
            <person name="Mungall K."/>
            <person name="Atkin R."/>
            <person name="Bason N."/>
            <person name="Brooks K."/>
            <person name="Chillingworth T."/>
            <person name="Clark K."/>
            <person name="Doggett J."/>
            <person name="Fraser A."/>
            <person name="Hance Z."/>
            <person name="Hauser H."/>
            <person name="Jagels K."/>
            <person name="Moule S."/>
            <person name="Norbertczak H."/>
            <person name="Ormond D."/>
            <person name="Price C."/>
            <person name="Quail M.A."/>
            <person name="Sanders M."/>
            <person name="Walker D."/>
            <person name="Whitehead S."/>
            <person name="Salmond G.P.C."/>
            <person name="Birch P.R.J."/>
            <person name="Parkhill J."/>
            <person name="Toth I.K."/>
        </authorList>
    </citation>
    <scope>NUCLEOTIDE SEQUENCE [LARGE SCALE GENOMIC DNA]</scope>
    <source>
        <strain>SCRI 1043 / ATCC BAA-672</strain>
    </source>
</reference>
<proteinExistence type="inferred from homology"/>
<gene>
    <name evidence="1" type="primary">pptA</name>
    <name type="ordered locus">ECA2245</name>
</gene>
<keyword id="KW-0963">Cytoplasm</keyword>
<keyword id="KW-0413">Isomerase</keyword>
<keyword id="KW-1185">Reference proteome</keyword>
<name>PPTA_PECAS</name>
<evidence type="ECO:0000255" key="1">
    <source>
        <dbReference type="HAMAP-Rule" id="MF_00718"/>
    </source>
</evidence>
<comment type="subunit">
    <text evidence="1">Homodimer.</text>
</comment>
<comment type="subcellular location">
    <subcellularLocation>
        <location evidence="1">Cytoplasm</location>
    </subcellularLocation>
</comment>
<comment type="similarity">
    <text evidence="1">Belongs to the 4-oxalocrotonate tautomerase family. PptA subfamily.</text>
</comment>